<dbReference type="EC" id="6.3.5.5" evidence="1"/>
<dbReference type="EMBL" id="AL590842">
    <property type="protein sequence ID" value="CAL19161.1"/>
    <property type="molecule type" value="Genomic_DNA"/>
</dbReference>
<dbReference type="EMBL" id="AE009952">
    <property type="protein sequence ID" value="AAM87241.1"/>
    <property type="status" value="ALT_INIT"/>
    <property type="molecule type" value="Genomic_DNA"/>
</dbReference>
<dbReference type="EMBL" id="AE017042">
    <property type="protein sequence ID" value="AAS63846.1"/>
    <property type="status" value="ALT_INIT"/>
    <property type="molecule type" value="Genomic_DNA"/>
</dbReference>
<dbReference type="PIR" id="AG0059">
    <property type="entry name" value="AG0059"/>
</dbReference>
<dbReference type="RefSeq" id="WP_002224759.1">
    <property type="nucleotide sequence ID" value="NZ_WUCL01000112.1"/>
</dbReference>
<dbReference type="RefSeq" id="YP_002345554.1">
    <property type="nucleotide sequence ID" value="NC_003143.1"/>
</dbReference>
<dbReference type="SMR" id="Q8ZIL5"/>
<dbReference type="IntAct" id="Q8ZIL5">
    <property type="interactions" value="6"/>
</dbReference>
<dbReference type="STRING" id="214092.YPO0481"/>
<dbReference type="PaxDb" id="214092-YPO0481"/>
<dbReference type="DNASU" id="1148640"/>
<dbReference type="EnsemblBacteria" id="AAS63846">
    <property type="protein sequence ID" value="AAS63846"/>
    <property type="gene ID" value="YP_3698"/>
</dbReference>
<dbReference type="GeneID" id="57974129"/>
<dbReference type="KEGG" id="ype:YPO0481"/>
<dbReference type="KEGG" id="ypk:y3693"/>
<dbReference type="KEGG" id="ypm:YP_3698"/>
<dbReference type="PATRIC" id="fig|214092.21.peg.729"/>
<dbReference type="eggNOG" id="COG0505">
    <property type="taxonomic scope" value="Bacteria"/>
</dbReference>
<dbReference type="HOGENOM" id="CLU_035901_1_1_6"/>
<dbReference type="OMA" id="CFSVQYH"/>
<dbReference type="OrthoDB" id="9804328at2"/>
<dbReference type="UniPathway" id="UPA00068">
    <property type="reaction ID" value="UER00171"/>
</dbReference>
<dbReference type="UniPathway" id="UPA00070">
    <property type="reaction ID" value="UER00115"/>
</dbReference>
<dbReference type="Proteomes" id="UP000000815">
    <property type="component" value="Chromosome"/>
</dbReference>
<dbReference type="Proteomes" id="UP000001019">
    <property type="component" value="Chromosome"/>
</dbReference>
<dbReference type="Proteomes" id="UP000002490">
    <property type="component" value="Chromosome"/>
</dbReference>
<dbReference type="GO" id="GO:0005951">
    <property type="term" value="C:carbamoyl-phosphate synthase complex"/>
    <property type="evidence" value="ECO:0000318"/>
    <property type="project" value="GO_Central"/>
</dbReference>
<dbReference type="GO" id="GO:0005737">
    <property type="term" value="C:cytoplasm"/>
    <property type="evidence" value="ECO:0000318"/>
    <property type="project" value="GO_Central"/>
</dbReference>
<dbReference type="GO" id="GO:0005524">
    <property type="term" value="F:ATP binding"/>
    <property type="evidence" value="ECO:0007669"/>
    <property type="project" value="UniProtKB-UniRule"/>
</dbReference>
<dbReference type="GO" id="GO:0004088">
    <property type="term" value="F:carbamoyl-phosphate synthase (glutamine-hydrolyzing) activity"/>
    <property type="evidence" value="ECO:0007669"/>
    <property type="project" value="UniProtKB-UniRule"/>
</dbReference>
<dbReference type="GO" id="GO:0004359">
    <property type="term" value="F:glutaminase activity"/>
    <property type="evidence" value="ECO:0007669"/>
    <property type="project" value="RHEA"/>
</dbReference>
<dbReference type="GO" id="GO:0006207">
    <property type="term" value="P:'de novo' pyrimidine nucleobase biosynthetic process"/>
    <property type="evidence" value="ECO:0007669"/>
    <property type="project" value="InterPro"/>
</dbReference>
<dbReference type="GO" id="GO:0044205">
    <property type="term" value="P:'de novo' UMP biosynthetic process"/>
    <property type="evidence" value="ECO:0007669"/>
    <property type="project" value="UniProtKB-UniRule"/>
</dbReference>
<dbReference type="GO" id="GO:0006541">
    <property type="term" value="P:glutamine metabolic process"/>
    <property type="evidence" value="ECO:0007669"/>
    <property type="project" value="InterPro"/>
</dbReference>
<dbReference type="GO" id="GO:0006526">
    <property type="term" value="P:L-arginine biosynthetic process"/>
    <property type="evidence" value="ECO:0000318"/>
    <property type="project" value="GO_Central"/>
</dbReference>
<dbReference type="CDD" id="cd01744">
    <property type="entry name" value="GATase1_CPSase"/>
    <property type="match status" value="1"/>
</dbReference>
<dbReference type="FunFam" id="3.40.50.880:FF:000011">
    <property type="entry name" value="Carbamoyl-phosphate synthase small chain"/>
    <property type="match status" value="1"/>
</dbReference>
<dbReference type="FunFam" id="3.50.30.20:FF:000001">
    <property type="entry name" value="Carbamoyl-phosphate synthase small chain"/>
    <property type="match status" value="1"/>
</dbReference>
<dbReference type="Gene3D" id="3.40.50.880">
    <property type="match status" value="1"/>
</dbReference>
<dbReference type="Gene3D" id="3.50.30.20">
    <property type="entry name" value="Carbamoyl-phosphate synthase small subunit, N-terminal domain"/>
    <property type="match status" value="1"/>
</dbReference>
<dbReference type="HAMAP" id="MF_01209">
    <property type="entry name" value="CPSase_S_chain"/>
    <property type="match status" value="1"/>
</dbReference>
<dbReference type="InterPro" id="IPR050472">
    <property type="entry name" value="Anth_synth/Amidotransfase"/>
</dbReference>
<dbReference type="InterPro" id="IPR006274">
    <property type="entry name" value="CarbamoylP_synth_ssu"/>
</dbReference>
<dbReference type="InterPro" id="IPR002474">
    <property type="entry name" value="CarbamoylP_synth_ssu_N"/>
</dbReference>
<dbReference type="InterPro" id="IPR036480">
    <property type="entry name" value="CarbP_synth_ssu_N_sf"/>
</dbReference>
<dbReference type="InterPro" id="IPR029062">
    <property type="entry name" value="Class_I_gatase-like"/>
</dbReference>
<dbReference type="InterPro" id="IPR035686">
    <property type="entry name" value="CPSase_GATase1"/>
</dbReference>
<dbReference type="InterPro" id="IPR017926">
    <property type="entry name" value="GATASE"/>
</dbReference>
<dbReference type="NCBIfam" id="TIGR01368">
    <property type="entry name" value="CPSaseIIsmall"/>
    <property type="match status" value="1"/>
</dbReference>
<dbReference type="NCBIfam" id="NF009475">
    <property type="entry name" value="PRK12838.1"/>
    <property type="match status" value="1"/>
</dbReference>
<dbReference type="PANTHER" id="PTHR43418:SF7">
    <property type="entry name" value="CARBAMOYL-PHOSPHATE SYNTHASE SMALL CHAIN"/>
    <property type="match status" value="1"/>
</dbReference>
<dbReference type="PANTHER" id="PTHR43418">
    <property type="entry name" value="MULTIFUNCTIONAL TRYPTOPHAN BIOSYNTHESIS PROTEIN-RELATED"/>
    <property type="match status" value="1"/>
</dbReference>
<dbReference type="Pfam" id="PF00988">
    <property type="entry name" value="CPSase_sm_chain"/>
    <property type="match status" value="1"/>
</dbReference>
<dbReference type="Pfam" id="PF00117">
    <property type="entry name" value="GATase"/>
    <property type="match status" value="1"/>
</dbReference>
<dbReference type="PRINTS" id="PR00097">
    <property type="entry name" value="ANTSNTHASEII"/>
</dbReference>
<dbReference type="PRINTS" id="PR00099">
    <property type="entry name" value="CPSGATASE"/>
</dbReference>
<dbReference type="PRINTS" id="PR00096">
    <property type="entry name" value="GATASE"/>
</dbReference>
<dbReference type="SMART" id="SM01097">
    <property type="entry name" value="CPSase_sm_chain"/>
    <property type="match status" value="1"/>
</dbReference>
<dbReference type="SUPFAM" id="SSF52021">
    <property type="entry name" value="Carbamoyl phosphate synthetase, small subunit N-terminal domain"/>
    <property type="match status" value="1"/>
</dbReference>
<dbReference type="SUPFAM" id="SSF52317">
    <property type="entry name" value="Class I glutamine amidotransferase-like"/>
    <property type="match status" value="1"/>
</dbReference>
<dbReference type="PROSITE" id="PS51273">
    <property type="entry name" value="GATASE_TYPE_1"/>
    <property type="match status" value="1"/>
</dbReference>
<protein>
    <recommendedName>
        <fullName evidence="1">Carbamoyl phosphate synthase small chain</fullName>
        <ecNumber evidence="1">6.3.5.5</ecNumber>
    </recommendedName>
    <alternativeName>
        <fullName evidence="1">Carbamoyl phosphate synthetase glutamine chain</fullName>
    </alternativeName>
</protein>
<sequence length="391" mass="42422">MIKSALLVLEDGTQFHGRAIGAEGTAVGEVVFNTSMTGYQEILTDPSYSRQIVTLTYPHIGNVGTNASDEESSAVHAQGLVIRDLPLIASNYRNEEGLSEYLKRHNIVAIADIDTRKLTRLLREKGAQNGCIIVGELSDAALALEKAKAFPGLKGMDLAKEVTTKEMYQWLQGSWTLEGDLPAAKQPEDLPFHVVAYDYGVKRNILRMLVDRGCRLTVVPAQTPAEDVLKLNPDGIFLSNGPGDPEPCDYAITAIKRFLETDIPVFGICLGHQLLALASGAKTVKMKFGHHGGNHPVKDLDASCVMITAQNHGFAVDETSLPSNLRTTHVSLFDGSLQGLHRTDKAAFSFQGHPEASPGPHDAAPLFDHFIELIEAYRASSVSLNCSNSHK</sequence>
<organism>
    <name type="scientific">Yersinia pestis</name>
    <dbReference type="NCBI Taxonomy" id="632"/>
    <lineage>
        <taxon>Bacteria</taxon>
        <taxon>Pseudomonadati</taxon>
        <taxon>Pseudomonadota</taxon>
        <taxon>Gammaproteobacteria</taxon>
        <taxon>Enterobacterales</taxon>
        <taxon>Yersiniaceae</taxon>
        <taxon>Yersinia</taxon>
    </lineage>
</organism>
<feature type="chain" id="PRO_0000112352" description="Carbamoyl phosphate synthase small chain">
    <location>
        <begin position="1"/>
        <end position="391"/>
    </location>
</feature>
<feature type="domain" description="Glutamine amidotransferase type-1" evidence="1">
    <location>
        <begin position="193"/>
        <end position="380"/>
    </location>
</feature>
<feature type="region of interest" description="CPSase" evidence="1">
    <location>
        <begin position="1"/>
        <end position="189"/>
    </location>
</feature>
<feature type="active site" description="Nucleophile" evidence="1">
    <location>
        <position position="269"/>
    </location>
</feature>
<feature type="active site" evidence="1">
    <location>
        <position position="353"/>
    </location>
</feature>
<feature type="active site" evidence="1">
    <location>
        <position position="355"/>
    </location>
</feature>
<feature type="binding site" evidence="1">
    <location>
        <position position="47"/>
    </location>
    <ligand>
        <name>L-glutamine</name>
        <dbReference type="ChEBI" id="CHEBI:58359"/>
    </ligand>
</feature>
<feature type="binding site" evidence="1">
    <location>
        <position position="241"/>
    </location>
    <ligand>
        <name>L-glutamine</name>
        <dbReference type="ChEBI" id="CHEBI:58359"/>
    </ligand>
</feature>
<feature type="binding site" evidence="1">
    <location>
        <position position="243"/>
    </location>
    <ligand>
        <name>L-glutamine</name>
        <dbReference type="ChEBI" id="CHEBI:58359"/>
    </ligand>
</feature>
<feature type="binding site" evidence="1">
    <location>
        <position position="270"/>
    </location>
    <ligand>
        <name>L-glutamine</name>
        <dbReference type="ChEBI" id="CHEBI:58359"/>
    </ligand>
</feature>
<feature type="binding site" evidence="1">
    <location>
        <position position="273"/>
    </location>
    <ligand>
        <name>L-glutamine</name>
        <dbReference type="ChEBI" id="CHEBI:58359"/>
    </ligand>
</feature>
<feature type="binding site" evidence="1">
    <location>
        <position position="311"/>
    </location>
    <ligand>
        <name>L-glutamine</name>
        <dbReference type="ChEBI" id="CHEBI:58359"/>
    </ligand>
</feature>
<feature type="binding site" evidence="1">
    <location>
        <position position="313"/>
    </location>
    <ligand>
        <name>L-glutamine</name>
        <dbReference type="ChEBI" id="CHEBI:58359"/>
    </ligand>
</feature>
<feature type="binding site" evidence="1">
    <location>
        <position position="314"/>
    </location>
    <ligand>
        <name>L-glutamine</name>
        <dbReference type="ChEBI" id="CHEBI:58359"/>
    </ligand>
</feature>
<reference key="1">
    <citation type="journal article" date="2001" name="Nature">
        <title>Genome sequence of Yersinia pestis, the causative agent of plague.</title>
        <authorList>
            <person name="Parkhill J."/>
            <person name="Wren B.W."/>
            <person name="Thomson N.R."/>
            <person name="Titball R.W."/>
            <person name="Holden M.T.G."/>
            <person name="Prentice M.B."/>
            <person name="Sebaihia M."/>
            <person name="James K.D."/>
            <person name="Churcher C.M."/>
            <person name="Mungall K.L."/>
            <person name="Baker S."/>
            <person name="Basham D."/>
            <person name="Bentley S.D."/>
            <person name="Brooks K."/>
            <person name="Cerdeno-Tarraga A.-M."/>
            <person name="Chillingworth T."/>
            <person name="Cronin A."/>
            <person name="Davies R.M."/>
            <person name="Davis P."/>
            <person name="Dougan G."/>
            <person name="Feltwell T."/>
            <person name="Hamlin N."/>
            <person name="Holroyd S."/>
            <person name="Jagels K."/>
            <person name="Karlyshev A.V."/>
            <person name="Leather S."/>
            <person name="Moule S."/>
            <person name="Oyston P.C.F."/>
            <person name="Quail M.A."/>
            <person name="Rutherford K.M."/>
            <person name="Simmonds M."/>
            <person name="Skelton J."/>
            <person name="Stevens K."/>
            <person name="Whitehead S."/>
            <person name="Barrell B.G."/>
        </authorList>
    </citation>
    <scope>NUCLEOTIDE SEQUENCE [LARGE SCALE GENOMIC DNA]</scope>
    <source>
        <strain>CO-92 / Biovar Orientalis</strain>
    </source>
</reference>
<reference key="2">
    <citation type="journal article" date="2002" name="J. Bacteriol.">
        <title>Genome sequence of Yersinia pestis KIM.</title>
        <authorList>
            <person name="Deng W."/>
            <person name="Burland V."/>
            <person name="Plunkett G. III"/>
            <person name="Boutin A."/>
            <person name="Mayhew G.F."/>
            <person name="Liss P."/>
            <person name="Perna N.T."/>
            <person name="Rose D.J."/>
            <person name="Mau B."/>
            <person name="Zhou S."/>
            <person name="Schwartz D.C."/>
            <person name="Fetherston J.D."/>
            <person name="Lindler L.E."/>
            <person name="Brubaker R.R."/>
            <person name="Plano G.V."/>
            <person name="Straley S.C."/>
            <person name="McDonough K.A."/>
            <person name="Nilles M.L."/>
            <person name="Matson J.S."/>
            <person name="Blattner F.R."/>
            <person name="Perry R.D."/>
        </authorList>
    </citation>
    <scope>NUCLEOTIDE SEQUENCE [LARGE SCALE GENOMIC DNA]</scope>
    <source>
        <strain>KIM10+ / Biovar Mediaevalis</strain>
    </source>
</reference>
<reference key="3">
    <citation type="journal article" date="2004" name="DNA Res.">
        <title>Complete genome sequence of Yersinia pestis strain 91001, an isolate avirulent to humans.</title>
        <authorList>
            <person name="Song Y."/>
            <person name="Tong Z."/>
            <person name="Wang J."/>
            <person name="Wang L."/>
            <person name="Guo Z."/>
            <person name="Han Y."/>
            <person name="Zhang J."/>
            <person name="Pei D."/>
            <person name="Zhou D."/>
            <person name="Qin H."/>
            <person name="Pang X."/>
            <person name="Han Y."/>
            <person name="Zhai J."/>
            <person name="Li M."/>
            <person name="Cui B."/>
            <person name="Qi Z."/>
            <person name="Jin L."/>
            <person name="Dai R."/>
            <person name="Chen F."/>
            <person name="Li S."/>
            <person name="Ye C."/>
            <person name="Du Z."/>
            <person name="Lin W."/>
            <person name="Wang J."/>
            <person name="Yu J."/>
            <person name="Yang H."/>
            <person name="Wang J."/>
            <person name="Huang P."/>
            <person name="Yang R."/>
        </authorList>
    </citation>
    <scope>NUCLEOTIDE SEQUENCE [LARGE SCALE GENOMIC DNA]</scope>
    <source>
        <strain>91001 / Biovar Mediaevalis</strain>
    </source>
</reference>
<keyword id="KW-0028">Amino-acid biosynthesis</keyword>
<keyword id="KW-0055">Arginine biosynthesis</keyword>
<keyword id="KW-0067">ATP-binding</keyword>
<keyword id="KW-0315">Glutamine amidotransferase</keyword>
<keyword id="KW-0436">Ligase</keyword>
<keyword id="KW-0547">Nucleotide-binding</keyword>
<keyword id="KW-0665">Pyrimidine biosynthesis</keyword>
<keyword id="KW-1185">Reference proteome</keyword>
<comment type="function">
    <text evidence="1">Small subunit of the glutamine-dependent carbamoyl phosphate synthetase (CPSase). CPSase catalyzes the formation of carbamoyl phosphate from the ammonia moiety of glutamine, carbonate, and phosphate donated by ATP, constituting the first step of 2 biosynthetic pathways, one leading to arginine and/or urea and the other to pyrimidine nucleotides. The small subunit (glutamine amidotransferase) binds and cleaves glutamine to supply the large subunit with the substrate ammonia.</text>
</comment>
<comment type="catalytic activity">
    <reaction evidence="1">
        <text>hydrogencarbonate + L-glutamine + 2 ATP + H2O = carbamoyl phosphate + L-glutamate + 2 ADP + phosphate + 2 H(+)</text>
        <dbReference type="Rhea" id="RHEA:18633"/>
        <dbReference type="ChEBI" id="CHEBI:15377"/>
        <dbReference type="ChEBI" id="CHEBI:15378"/>
        <dbReference type="ChEBI" id="CHEBI:17544"/>
        <dbReference type="ChEBI" id="CHEBI:29985"/>
        <dbReference type="ChEBI" id="CHEBI:30616"/>
        <dbReference type="ChEBI" id="CHEBI:43474"/>
        <dbReference type="ChEBI" id="CHEBI:58228"/>
        <dbReference type="ChEBI" id="CHEBI:58359"/>
        <dbReference type="ChEBI" id="CHEBI:456216"/>
        <dbReference type="EC" id="6.3.5.5"/>
    </reaction>
</comment>
<comment type="catalytic activity">
    <molecule>Carbamoyl phosphate synthase small chain</molecule>
    <reaction evidence="1">
        <text>L-glutamine + H2O = L-glutamate + NH4(+)</text>
        <dbReference type="Rhea" id="RHEA:15889"/>
        <dbReference type="ChEBI" id="CHEBI:15377"/>
        <dbReference type="ChEBI" id="CHEBI:28938"/>
        <dbReference type="ChEBI" id="CHEBI:29985"/>
        <dbReference type="ChEBI" id="CHEBI:58359"/>
    </reaction>
</comment>
<comment type="pathway">
    <text evidence="1">Amino-acid biosynthesis; L-arginine biosynthesis; carbamoyl phosphate from bicarbonate: step 1/1.</text>
</comment>
<comment type="pathway">
    <text evidence="1">Pyrimidine metabolism; UMP biosynthesis via de novo pathway; (S)-dihydroorotate from bicarbonate: step 1/3.</text>
</comment>
<comment type="subunit">
    <text evidence="1">Composed of two chains; the small (or glutamine) chain promotes the hydrolysis of glutamine to ammonia, which is used by the large (or ammonia) chain to synthesize carbamoyl phosphate. Tetramer of heterodimers (alpha,beta)4.</text>
</comment>
<comment type="similarity">
    <text evidence="1">Belongs to the CarA family.</text>
</comment>
<comment type="sequence caution" evidence="2">
    <conflict type="erroneous initiation">
        <sequence resource="EMBL-CDS" id="AAM87241"/>
    </conflict>
</comment>
<comment type="sequence caution" evidence="2">
    <conflict type="erroneous initiation">
        <sequence resource="EMBL-CDS" id="AAS63846"/>
    </conflict>
</comment>
<gene>
    <name evidence="1" type="primary">carA</name>
    <name type="ordered locus">YPO0481</name>
    <name type="ordered locus">y3693</name>
    <name type="ordered locus">YP_3698</name>
</gene>
<name>CARA_YERPE</name>
<proteinExistence type="inferred from homology"/>
<accession>Q8ZIL5</accession>
<accession>Q0WJI4</accession>
<evidence type="ECO:0000255" key="1">
    <source>
        <dbReference type="HAMAP-Rule" id="MF_01209"/>
    </source>
</evidence>
<evidence type="ECO:0000305" key="2"/>